<gene>
    <name evidence="1" type="primary">ttcA</name>
    <name type="ordered locus">Geob_0916</name>
</gene>
<protein>
    <recommendedName>
        <fullName evidence="1">tRNA-cytidine(32) 2-sulfurtransferase</fullName>
        <ecNumber evidence="1">2.8.1.-</ecNumber>
    </recommendedName>
    <alternativeName>
        <fullName evidence="1">Two-thiocytidine biosynthesis protein A</fullName>
    </alternativeName>
    <alternativeName>
        <fullName evidence="1">tRNA 2-thiocytidine biosynthesis protein TtcA</fullName>
    </alternativeName>
</protein>
<evidence type="ECO:0000255" key="1">
    <source>
        <dbReference type="HAMAP-Rule" id="MF_01850"/>
    </source>
</evidence>
<accession>B9M1Y2</accession>
<organism>
    <name type="scientific">Geotalea daltonii (strain DSM 22248 / JCM 15807 / FRC-32)</name>
    <name type="common">Geobacter daltonii</name>
    <dbReference type="NCBI Taxonomy" id="316067"/>
    <lineage>
        <taxon>Bacteria</taxon>
        <taxon>Pseudomonadati</taxon>
        <taxon>Thermodesulfobacteriota</taxon>
        <taxon>Desulfuromonadia</taxon>
        <taxon>Geobacterales</taxon>
        <taxon>Geobacteraceae</taxon>
        <taxon>Geotalea</taxon>
    </lineage>
</organism>
<reference key="1">
    <citation type="submission" date="2009-01" db="EMBL/GenBank/DDBJ databases">
        <title>Complete sequence of Geobacter sp. FRC-32.</title>
        <authorList>
            <consortium name="US DOE Joint Genome Institute"/>
            <person name="Lucas S."/>
            <person name="Copeland A."/>
            <person name="Lapidus A."/>
            <person name="Glavina del Rio T."/>
            <person name="Dalin E."/>
            <person name="Tice H."/>
            <person name="Bruce D."/>
            <person name="Goodwin L."/>
            <person name="Pitluck S."/>
            <person name="Saunders E."/>
            <person name="Brettin T."/>
            <person name="Detter J.C."/>
            <person name="Han C."/>
            <person name="Larimer F."/>
            <person name="Land M."/>
            <person name="Hauser L."/>
            <person name="Kyrpides N."/>
            <person name="Ovchinnikova G."/>
            <person name="Kostka J."/>
            <person name="Richardson P."/>
        </authorList>
    </citation>
    <scope>NUCLEOTIDE SEQUENCE [LARGE SCALE GENOMIC DNA]</scope>
    <source>
        <strain>DSM 22248 / JCM 15807 / FRC-32</strain>
    </source>
</reference>
<keyword id="KW-0004">4Fe-4S</keyword>
<keyword id="KW-0067">ATP-binding</keyword>
<keyword id="KW-0963">Cytoplasm</keyword>
<keyword id="KW-0408">Iron</keyword>
<keyword id="KW-0411">Iron-sulfur</keyword>
<keyword id="KW-0460">Magnesium</keyword>
<keyword id="KW-0479">Metal-binding</keyword>
<keyword id="KW-0547">Nucleotide-binding</keyword>
<keyword id="KW-1185">Reference proteome</keyword>
<keyword id="KW-0694">RNA-binding</keyword>
<keyword id="KW-0808">Transferase</keyword>
<keyword id="KW-0819">tRNA processing</keyword>
<keyword id="KW-0820">tRNA-binding</keyword>
<feature type="chain" id="PRO_1000188645" description="tRNA-cytidine(32) 2-sulfurtransferase">
    <location>
        <begin position="1"/>
        <end position="252"/>
    </location>
</feature>
<feature type="short sequence motif" description="PP-loop motif" evidence="1">
    <location>
        <begin position="37"/>
        <end position="42"/>
    </location>
</feature>
<feature type="binding site" evidence="1">
    <location>
        <position position="112"/>
    </location>
    <ligand>
        <name>[4Fe-4S] cluster</name>
        <dbReference type="ChEBI" id="CHEBI:49883"/>
    </ligand>
</feature>
<feature type="binding site" evidence="1">
    <location>
        <position position="115"/>
    </location>
    <ligand>
        <name>[4Fe-4S] cluster</name>
        <dbReference type="ChEBI" id="CHEBI:49883"/>
    </ligand>
</feature>
<feature type="binding site" evidence="1">
    <location>
        <position position="202"/>
    </location>
    <ligand>
        <name>[4Fe-4S] cluster</name>
        <dbReference type="ChEBI" id="CHEBI:49883"/>
    </ligand>
</feature>
<name>TTCA_GEODF</name>
<comment type="function">
    <text evidence="1">Catalyzes the ATP-dependent 2-thiolation of cytidine in position 32 of tRNA, to form 2-thiocytidine (s(2)C32). The sulfur atoms are provided by the cysteine/cysteine desulfurase (IscS) system.</text>
</comment>
<comment type="catalytic activity">
    <reaction evidence="1">
        <text>cytidine(32) in tRNA + S-sulfanyl-L-cysteinyl-[cysteine desulfurase] + AH2 + ATP = 2-thiocytidine(32) in tRNA + L-cysteinyl-[cysteine desulfurase] + A + AMP + diphosphate + H(+)</text>
        <dbReference type="Rhea" id="RHEA:57048"/>
        <dbReference type="Rhea" id="RHEA-COMP:10288"/>
        <dbReference type="Rhea" id="RHEA-COMP:12157"/>
        <dbReference type="Rhea" id="RHEA-COMP:12158"/>
        <dbReference type="Rhea" id="RHEA-COMP:14821"/>
        <dbReference type="ChEBI" id="CHEBI:13193"/>
        <dbReference type="ChEBI" id="CHEBI:15378"/>
        <dbReference type="ChEBI" id="CHEBI:17499"/>
        <dbReference type="ChEBI" id="CHEBI:29950"/>
        <dbReference type="ChEBI" id="CHEBI:30616"/>
        <dbReference type="ChEBI" id="CHEBI:33019"/>
        <dbReference type="ChEBI" id="CHEBI:61963"/>
        <dbReference type="ChEBI" id="CHEBI:82748"/>
        <dbReference type="ChEBI" id="CHEBI:141453"/>
        <dbReference type="ChEBI" id="CHEBI:456215"/>
    </reaction>
    <physiologicalReaction direction="left-to-right" evidence="1">
        <dbReference type="Rhea" id="RHEA:57049"/>
    </physiologicalReaction>
</comment>
<comment type="cofactor">
    <cofactor evidence="1">
        <name>Mg(2+)</name>
        <dbReference type="ChEBI" id="CHEBI:18420"/>
    </cofactor>
</comment>
<comment type="cofactor">
    <cofactor evidence="1">
        <name>[4Fe-4S] cluster</name>
        <dbReference type="ChEBI" id="CHEBI:49883"/>
    </cofactor>
    <text evidence="1">Binds 1 [4Fe-4S] cluster per subunit. The cluster is chelated by three Cys residues, the fourth Fe has a free coordination site that may bind a sulfur atom transferred from the persulfide of IscS.</text>
</comment>
<comment type="pathway">
    <text evidence="1">tRNA modification.</text>
</comment>
<comment type="subunit">
    <text evidence="1">Homodimer.</text>
</comment>
<comment type="subcellular location">
    <subcellularLocation>
        <location evidence="1">Cytoplasm</location>
    </subcellularLocation>
</comment>
<comment type="miscellaneous">
    <text evidence="1">The thiolation reaction likely consists of two steps: a first activation step by ATP to form an adenylated intermediate of the target base of tRNA, and a second nucleophilic substitution step of the sulfur (S) atom supplied by the hydrosulfide attached to the Fe-S cluster.</text>
</comment>
<comment type="similarity">
    <text evidence="1">Belongs to the TtcA family.</text>
</comment>
<proteinExistence type="inferred from homology"/>
<sequence length="252" mass="28671">MALIEDALYKRIKNRVGRAIAEYGLIEDGDRIAVGVSGGKDSYTLLHMLDTLRRRAPVRYEVVAINIDSGYPGFRADIIEEHLHENGFTVHMEKTDHYGIIKEKRRLDSSYCSICARLKRGALYALAQQHNCNKLALGHHMDDFIETLLLNQFFVGALKAMAPGMLADNGLTTVIRPLVYVSEEDIIQFSRNNRFPVVCCCCPVCGSADQQRRRMKELLKELEKENPYIKKSLLRALANVQPRHLLDKRLKS</sequence>
<dbReference type="EC" id="2.8.1.-" evidence="1"/>
<dbReference type="EMBL" id="CP001390">
    <property type="protein sequence ID" value="ACM19278.1"/>
    <property type="molecule type" value="Genomic_DNA"/>
</dbReference>
<dbReference type="RefSeq" id="WP_012646007.1">
    <property type="nucleotide sequence ID" value="NC_011979.1"/>
</dbReference>
<dbReference type="SMR" id="B9M1Y2"/>
<dbReference type="STRING" id="316067.Geob_0916"/>
<dbReference type="KEGG" id="geo:Geob_0916"/>
<dbReference type="eggNOG" id="COG0037">
    <property type="taxonomic scope" value="Bacteria"/>
</dbReference>
<dbReference type="HOGENOM" id="CLU_026481_0_0_7"/>
<dbReference type="OrthoDB" id="9801054at2"/>
<dbReference type="Proteomes" id="UP000007721">
    <property type="component" value="Chromosome"/>
</dbReference>
<dbReference type="GO" id="GO:0005737">
    <property type="term" value="C:cytoplasm"/>
    <property type="evidence" value="ECO:0007669"/>
    <property type="project" value="UniProtKB-SubCell"/>
</dbReference>
<dbReference type="GO" id="GO:0051539">
    <property type="term" value="F:4 iron, 4 sulfur cluster binding"/>
    <property type="evidence" value="ECO:0007669"/>
    <property type="project" value="UniProtKB-KW"/>
</dbReference>
<dbReference type="GO" id="GO:0005524">
    <property type="term" value="F:ATP binding"/>
    <property type="evidence" value="ECO:0007669"/>
    <property type="project" value="UniProtKB-KW"/>
</dbReference>
<dbReference type="GO" id="GO:0046872">
    <property type="term" value="F:metal ion binding"/>
    <property type="evidence" value="ECO:0007669"/>
    <property type="project" value="UniProtKB-KW"/>
</dbReference>
<dbReference type="GO" id="GO:0016740">
    <property type="term" value="F:transferase activity"/>
    <property type="evidence" value="ECO:0007669"/>
    <property type="project" value="UniProtKB-KW"/>
</dbReference>
<dbReference type="GO" id="GO:0000049">
    <property type="term" value="F:tRNA binding"/>
    <property type="evidence" value="ECO:0007669"/>
    <property type="project" value="UniProtKB-KW"/>
</dbReference>
<dbReference type="GO" id="GO:0006400">
    <property type="term" value="P:tRNA modification"/>
    <property type="evidence" value="ECO:0007669"/>
    <property type="project" value="UniProtKB-ARBA"/>
</dbReference>
<dbReference type="CDD" id="cd24138">
    <property type="entry name" value="TtcA-like"/>
    <property type="match status" value="1"/>
</dbReference>
<dbReference type="Gene3D" id="3.40.50.620">
    <property type="entry name" value="HUPs"/>
    <property type="match status" value="1"/>
</dbReference>
<dbReference type="HAMAP" id="MF_01850">
    <property type="entry name" value="TtcA"/>
    <property type="match status" value="1"/>
</dbReference>
<dbReference type="InterPro" id="IPR014729">
    <property type="entry name" value="Rossmann-like_a/b/a_fold"/>
</dbReference>
<dbReference type="InterPro" id="IPR011063">
    <property type="entry name" value="TilS/TtcA_N"/>
</dbReference>
<dbReference type="InterPro" id="IPR012089">
    <property type="entry name" value="tRNA_Cyd_32_2_STrfase"/>
</dbReference>
<dbReference type="InterPro" id="IPR035107">
    <property type="entry name" value="tRNA_thiolation_TtcA_Ctu1"/>
</dbReference>
<dbReference type="NCBIfam" id="NF007972">
    <property type="entry name" value="PRK10696.1"/>
    <property type="match status" value="1"/>
</dbReference>
<dbReference type="PANTHER" id="PTHR43686:SF1">
    <property type="entry name" value="AMINOTRAN_5 DOMAIN-CONTAINING PROTEIN"/>
    <property type="match status" value="1"/>
</dbReference>
<dbReference type="PANTHER" id="PTHR43686">
    <property type="entry name" value="SULFURTRANSFERASE-RELATED"/>
    <property type="match status" value="1"/>
</dbReference>
<dbReference type="Pfam" id="PF01171">
    <property type="entry name" value="ATP_bind_3"/>
    <property type="match status" value="1"/>
</dbReference>
<dbReference type="PIRSF" id="PIRSF004976">
    <property type="entry name" value="ATPase_YdaO"/>
    <property type="match status" value="1"/>
</dbReference>
<dbReference type="SUPFAM" id="SSF52402">
    <property type="entry name" value="Adenine nucleotide alpha hydrolases-like"/>
    <property type="match status" value="1"/>
</dbReference>